<dbReference type="EC" id="3.1.21.10" evidence="1"/>
<dbReference type="EMBL" id="BA000043">
    <property type="protein sequence ID" value="BAD76452.1"/>
    <property type="molecule type" value="Genomic_DNA"/>
</dbReference>
<dbReference type="RefSeq" id="WP_011231652.1">
    <property type="nucleotide sequence ID" value="NC_006510.1"/>
</dbReference>
<dbReference type="PDB" id="1Y1O">
    <property type="method" value="X-ray"/>
    <property type="resolution" value="2.20 A"/>
    <property type="chains" value="A/B/C/D=1-200"/>
</dbReference>
<dbReference type="PDB" id="2FCO">
    <property type="method" value="X-ray"/>
    <property type="resolution" value="1.40 A"/>
    <property type="chains" value="A/B=1-200"/>
</dbReference>
<dbReference type="PDBsum" id="1Y1O"/>
<dbReference type="PDBsum" id="2FCO"/>
<dbReference type="SMR" id="Q5KXY4"/>
<dbReference type="STRING" id="235909.GK2167"/>
<dbReference type="GeneID" id="32064019"/>
<dbReference type="KEGG" id="gka:GK2167"/>
<dbReference type="eggNOG" id="COG3331">
    <property type="taxonomic scope" value="Bacteria"/>
</dbReference>
<dbReference type="HOGENOM" id="CLU_096340_0_0_9"/>
<dbReference type="EvolutionaryTrace" id="Q5KXY4"/>
<dbReference type="Proteomes" id="UP000001172">
    <property type="component" value="Chromosome"/>
</dbReference>
<dbReference type="GO" id="GO:0005737">
    <property type="term" value="C:cytoplasm"/>
    <property type="evidence" value="ECO:0007669"/>
    <property type="project" value="UniProtKB-SubCell"/>
</dbReference>
<dbReference type="GO" id="GO:0004519">
    <property type="term" value="F:endonuclease activity"/>
    <property type="evidence" value="ECO:0007669"/>
    <property type="project" value="UniProtKB-UniRule"/>
</dbReference>
<dbReference type="GO" id="GO:0000287">
    <property type="term" value="F:magnesium ion binding"/>
    <property type="evidence" value="ECO:0007669"/>
    <property type="project" value="UniProtKB-UniRule"/>
</dbReference>
<dbReference type="GO" id="GO:0003676">
    <property type="term" value="F:nucleic acid binding"/>
    <property type="evidence" value="ECO:0007669"/>
    <property type="project" value="InterPro"/>
</dbReference>
<dbReference type="GO" id="GO:0007059">
    <property type="term" value="P:chromosome segregation"/>
    <property type="evidence" value="ECO:0007669"/>
    <property type="project" value="UniProtKB-UniRule"/>
</dbReference>
<dbReference type="GO" id="GO:0006310">
    <property type="term" value="P:DNA recombination"/>
    <property type="evidence" value="ECO:0007669"/>
    <property type="project" value="UniProtKB-UniRule"/>
</dbReference>
<dbReference type="GO" id="GO:0006281">
    <property type="term" value="P:DNA repair"/>
    <property type="evidence" value="ECO:0007669"/>
    <property type="project" value="UniProtKB-UniRule"/>
</dbReference>
<dbReference type="CDD" id="cd22354">
    <property type="entry name" value="RecU-like"/>
    <property type="match status" value="1"/>
</dbReference>
<dbReference type="Gene3D" id="3.40.1350.10">
    <property type="match status" value="1"/>
</dbReference>
<dbReference type="HAMAP" id="MF_00130">
    <property type="entry name" value="RecU"/>
    <property type="match status" value="1"/>
</dbReference>
<dbReference type="InterPro" id="IPR004612">
    <property type="entry name" value="Resolv_RecU"/>
</dbReference>
<dbReference type="InterPro" id="IPR011335">
    <property type="entry name" value="Restrct_endonuc-II-like"/>
</dbReference>
<dbReference type="InterPro" id="IPR011856">
    <property type="entry name" value="tRNA_endonuc-like_dom_sf"/>
</dbReference>
<dbReference type="NCBIfam" id="NF002581">
    <property type="entry name" value="PRK02234.1-2"/>
    <property type="match status" value="1"/>
</dbReference>
<dbReference type="NCBIfam" id="NF002584">
    <property type="entry name" value="PRK02234.1-5"/>
    <property type="match status" value="1"/>
</dbReference>
<dbReference type="NCBIfam" id="TIGR00648">
    <property type="entry name" value="recU"/>
    <property type="match status" value="1"/>
</dbReference>
<dbReference type="Pfam" id="PF03838">
    <property type="entry name" value="RecU"/>
    <property type="match status" value="1"/>
</dbReference>
<dbReference type="PIRSF" id="PIRSF037785">
    <property type="entry name" value="RecU"/>
    <property type="match status" value="1"/>
</dbReference>
<dbReference type="SUPFAM" id="SSF52980">
    <property type="entry name" value="Restriction endonuclease-like"/>
    <property type="match status" value="1"/>
</dbReference>
<evidence type="ECO:0000255" key="1">
    <source>
        <dbReference type="HAMAP-Rule" id="MF_00130"/>
    </source>
</evidence>
<evidence type="ECO:0000256" key="2">
    <source>
        <dbReference type="SAM" id="MobiDB-lite"/>
    </source>
</evidence>
<evidence type="ECO:0000269" key="3">
    <source>
    </source>
</evidence>
<evidence type="ECO:0000269" key="4">
    <source>
    </source>
</evidence>
<evidence type="ECO:0000305" key="5"/>
<evidence type="ECO:0007829" key="6">
    <source>
        <dbReference type="PDB" id="1Y1O"/>
    </source>
</evidence>
<evidence type="ECO:0007829" key="7">
    <source>
        <dbReference type="PDB" id="2FCO"/>
    </source>
</evidence>
<proteinExistence type="evidence at protein level"/>
<name>RECU_GEOKA</name>
<protein>
    <recommendedName>
        <fullName evidence="1">Holliday junction resolvase RecU</fullName>
        <ecNumber evidence="1">3.1.21.10</ecNumber>
    </recommendedName>
    <alternativeName>
        <fullName evidence="1">Recombination protein U homolog</fullName>
    </alternativeName>
</protein>
<feature type="chain" id="PRO_1000016723" description="Holliday junction resolvase RecU">
    <location>
        <begin position="1"/>
        <end position="200"/>
    </location>
</feature>
<feature type="region of interest" description="Disordered" evidence="2">
    <location>
        <begin position="1"/>
        <end position="27"/>
    </location>
</feature>
<feature type="binding site">
    <location>
        <position position="84"/>
    </location>
    <ligand>
        <name>Mg(2+)</name>
        <dbReference type="ChEBI" id="CHEBI:18420"/>
    </ligand>
</feature>
<feature type="binding site">
    <location>
        <position position="86"/>
    </location>
    <ligand>
        <name>Mg(2+)</name>
        <dbReference type="ChEBI" id="CHEBI:18420"/>
    </ligand>
</feature>
<feature type="binding site" evidence="5">
    <location>
        <position position="99"/>
    </location>
    <ligand>
        <name>Mg(2+)</name>
        <dbReference type="ChEBI" id="CHEBI:18420"/>
    </ligand>
</feature>
<feature type="binding site">
    <location>
        <position position="118"/>
    </location>
    <ligand>
        <name>Mg(2+)</name>
        <dbReference type="ChEBI" id="CHEBI:18420"/>
    </ligand>
</feature>
<feature type="site" description="Transition state stabilizer" evidence="5">
    <location>
        <position position="101"/>
    </location>
</feature>
<feature type="mutagenesis site" description="Loss of activity." evidence="3">
    <original>D</original>
    <variation>A</variation>
    <location>
        <position position="86"/>
    </location>
</feature>
<feature type="helix" evidence="7">
    <location>
        <begin position="33"/>
        <end position="46"/>
    </location>
</feature>
<feature type="strand" evidence="7">
    <location>
        <begin position="51"/>
        <end position="54"/>
    </location>
</feature>
<feature type="strand" evidence="6">
    <location>
        <begin position="59"/>
        <end position="65"/>
    </location>
</feature>
<feature type="strand" evidence="6">
    <location>
        <begin position="68"/>
        <end position="70"/>
    </location>
</feature>
<feature type="strand" evidence="6">
    <location>
        <begin position="73"/>
        <end position="79"/>
    </location>
</feature>
<feature type="strand" evidence="7">
    <location>
        <begin position="86"/>
        <end position="91"/>
    </location>
</feature>
<feature type="strand" evidence="7">
    <location>
        <begin position="94"/>
        <end position="104"/>
    </location>
</feature>
<feature type="strand" evidence="7">
    <location>
        <begin position="106"/>
        <end position="110"/>
    </location>
</feature>
<feature type="helix" evidence="7">
    <location>
        <begin position="111"/>
        <end position="113"/>
    </location>
</feature>
<feature type="helix" evidence="7">
    <location>
        <begin position="116"/>
        <end position="127"/>
    </location>
</feature>
<feature type="strand" evidence="7">
    <location>
        <begin position="131"/>
        <end position="138"/>
    </location>
</feature>
<feature type="turn" evidence="7">
    <location>
        <begin position="139"/>
        <end position="142"/>
    </location>
</feature>
<feature type="strand" evidence="7">
    <location>
        <begin position="143"/>
        <end position="148"/>
    </location>
</feature>
<feature type="helix" evidence="7">
    <location>
        <begin position="149"/>
        <end position="158"/>
    </location>
</feature>
<feature type="turn" evidence="7">
    <location>
        <begin position="159"/>
        <end position="162"/>
    </location>
</feature>
<feature type="strand" evidence="7">
    <location>
        <begin position="165"/>
        <end position="168"/>
    </location>
</feature>
<feature type="helix" evidence="7">
    <location>
        <begin position="169"/>
        <end position="175"/>
    </location>
</feature>
<feature type="strand" evidence="7">
    <location>
        <begin position="176"/>
        <end position="178"/>
    </location>
</feature>
<feature type="strand" evidence="7">
    <location>
        <begin position="183"/>
        <end position="187"/>
    </location>
</feature>
<feature type="helix" evidence="7">
    <location>
        <begin position="189"/>
        <end position="197"/>
    </location>
</feature>
<comment type="function">
    <text evidence="1 3">Endonuclease that resolves Holliday junction intermediates in genetic recombination. Cleaves mobile four-strand junctions by introducing symmetrical nicks in paired strands. Promotes annealing of linear ssDNA with homologous dsDNA. Required for DNA repair, homologous recombination and chromosome segregation.</text>
</comment>
<comment type="catalytic activity">
    <reaction evidence="1">
        <text>Endonucleolytic cleavage at a junction such as a reciprocal single-stranded crossover between two homologous DNA duplexes (Holliday junction).</text>
        <dbReference type="EC" id="3.1.21.10"/>
    </reaction>
</comment>
<comment type="cofactor">
    <cofactor>
        <name>Mg(2+)</name>
        <dbReference type="ChEBI" id="CHEBI:18420"/>
    </cofactor>
    <text>Binds 1 Mg(2+) ion per subunit.</text>
</comment>
<comment type="subunit">
    <text evidence="3 4">Homodimer.</text>
</comment>
<comment type="subcellular location">
    <subcellularLocation>
        <location evidence="5">Cytoplasm</location>
    </subcellularLocation>
</comment>
<comment type="similarity">
    <text evidence="1">Belongs to the RecU family.</text>
</comment>
<keyword id="KW-0002">3D-structure</keyword>
<keyword id="KW-0963">Cytoplasm</keyword>
<keyword id="KW-0227">DNA damage</keyword>
<keyword id="KW-0233">DNA recombination</keyword>
<keyword id="KW-0234">DNA repair</keyword>
<keyword id="KW-0255">Endonuclease</keyword>
<keyword id="KW-0378">Hydrolase</keyword>
<keyword id="KW-0460">Magnesium</keyword>
<keyword id="KW-0479">Metal-binding</keyword>
<keyword id="KW-0540">Nuclease</keyword>
<keyword id="KW-1185">Reference proteome</keyword>
<accession>Q5KXY4</accession>
<sequence>MALKYPSGKEYRGNKPNAARRPAADYANRGMTLEDDLNATNEYYRERGIAVIHKKPTPVQIVRVDYPKRSAAVITEAYFRQASTTDYNGVYRGKYIDFEAKETKNKTAFPLKNFHAHQIRHMEQVVAHGGICFAILRFSLLNETYLLDASHLIAWWNKQEAGGRKSIPKQEIERHGHSIPLGYQPRIDYISVVDNVYFTR</sequence>
<gene>
    <name evidence="1" type="primary">recU</name>
    <name type="ordered locus">GK2167</name>
</gene>
<reference key="1">
    <citation type="journal article" date="2004" name="Nucleic Acids Res.">
        <title>Thermoadaptation trait revealed by the genome sequence of thermophilic Geobacillus kaustophilus.</title>
        <authorList>
            <person name="Takami H."/>
            <person name="Takaki Y."/>
            <person name="Chee G.-J."/>
            <person name="Nishi S."/>
            <person name="Shimamura S."/>
            <person name="Suzuki H."/>
            <person name="Matsui S."/>
            <person name="Uchiyama I."/>
        </authorList>
    </citation>
    <scope>NUCLEOTIDE SEQUENCE [LARGE SCALE GENOMIC DNA]</scope>
    <source>
        <strain>HTA426</strain>
    </source>
</reference>
<reference key="2">
    <citation type="journal article" date="2002" name="Protein Sci.">
        <title>PrfA protein of Bacillus species: prediction and demonstration of endonuclease activity on DNA.</title>
        <authorList>
            <person name="Rigden D.J."/>
            <person name="Setlow P."/>
            <person name="Setlow B."/>
            <person name="Bagyan I."/>
            <person name="Stein R.A."/>
            <person name="Jedrzejas M.J."/>
        </authorList>
    </citation>
    <scope>FUNCTION</scope>
    <scope>SUBUNIT</scope>
    <scope>MUTAGENESIS OF ASP-86</scope>
</reference>
<reference key="3">
    <citation type="journal article" date="2007" name="Proteins">
        <title>Structure, flexibility, and mechanism of the Bacillus stearothermophilus RecU Holliday junction resolvase.</title>
        <authorList>
            <person name="Kelly S.J."/>
            <person name="Li J."/>
            <person name="Setlow P."/>
            <person name="Jedrzejas M.J."/>
        </authorList>
    </citation>
    <scope>X-RAY CRYSTALLOGRAPHY (1.4 ANGSTROMS) IN COMPLEX WITH MAGNESIUM IONS</scope>
    <scope>SUBUNIT</scope>
</reference>
<reference key="4">
    <citation type="submission" date="2005-01" db="PDB data bank">
        <title>X-ray crystal structure of penicillin-binding protein-related factor A from Bacillus stearothermophilus.</title>
        <authorList>
            <consortium name="Midwest center for structural genomics (MCSG)"/>
        </authorList>
    </citation>
    <scope>X-RAY CRYSTALLOGRAPHY (2.2 ANGSTROMS)</scope>
</reference>
<organism>
    <name type="scientific">Geobacillus kaustophilus (strain HTA426)</name>
    <dbReference type="NCBI Taxonomy" id="235909"/>
    <lineage>
        <taxon>Bacteria</taxon>
        <taxon>Bacillati</taxon>
        <taxon>Bacillota</taxon>
        <taxon>Bacilli</taxon>
        <taxon>Bacillales</taxon>
        <taxon>Anoxybacillaceae</taxon>
        <taxon>Geobacillus</taxon>
        <taxon>Geobacillus thermoleovorans group</taxon>
    </lineage>
</organism>